<accession>A9CFX5</accession>
<protein>
    <recommendedName>
        <fullName evidence="1">Biotin synthase</fullName>
        <ecNumber evidence="1">2.8.1.6</ecNumber>
    </recommendedName>
</protein>
<dbReference type="EC" id="2.8.1.6" evidence="1"/>
<dbReference type="EMBL" id="AE007870">
    <property type="protein sequence ID" value="AAK89428.1"/>
    <property type="molecule type" value="Genomic_DNA"/>
</dbReference>
<dbReference type="PIR" id="AI3047">
    <property type="entry name" value="AI3047"/>
</dbReference>
<dbReference type="PIR" id="B98238">
    <property type="entry name" value="B98238"/>
</dbReference>
<dbReference type="RefSeq" id="NP_356643.1">
    <property type="nucleotide sequence ID" value="NC_003063.2"/>
</dbReference>
<dbReference type="RefSeq" id="WP_010973491.1">
    <property type="nucleotide sequence ID" value="NC_003063.2"/>
</dbReference>
<dbReference type="SMR" id="A9CFX5"/>
<dbReference type="STRING" id="176299.Atu3997"/>
<dbReference type="EnsemblBacteria" id="AAK89428">
    <property type="protein sequence ID" value="AAK89428"/>
    <property type="gene ID" value="Atu3997"/>
</dbReference>
<dbReference type="GeneID" id="1135871"/>
<dbReference type="KEGG" id="atu:Atu3997"/>
<dbReference type="PATRIC" id="fig|176299.10.peg.3816"/>
<dbReference type="eggNOG" id="COG0502">
    <property type="taxonomic scope" value="Bacteria"/>
</dbReference>
<dbReference type="HOGENOM" id="CLU_033172_1_2_5"/>
<dbReference type="OrthoDB" id="9786826at2"/>
<dbReference type="PhylomeDB" id="A9CFX5"/>
<dbReference type="BioCyc" id="AGRO:ATU3997-MONOMER"/>
<dbReference type="UniPathway" id="UPA00078">
    <property type="reaction ID" value="UER00162"/>
</dbReference>
<dbReference type="Proteomes" id="UP000000813">
    <property type="component" value="Chromosome linear"/>
</dbReference>
<dbReference type="GO" id="GO:0051537">
    <property type="term" value="F:2 iron, 2 sulfur cluster binding"/>
    <property type="evidence" value="ECO:0007669"/>
    <property type="project" value="UniProtKB-KW"/>
</dbReference>
<dbReference type="GO" id="GO:0051539">
    <property type="term" value="F:4 iron, 4 sulfur cluster binding"/>
    <property type="evidence" value="ECO:0007669"/>
    <property type="project" value="UniProtKB-KW"/>
</dbReference>
<dbReference type="GO" id="GO:0004076">
    <property type="term" value="F:biotin synthase activity"/>
    <property type="evidence" value="ECO:0007669"/>
    <property type="project" value="UniProtKB-UniRule"/>
</dbReference>
<dbReference type="GO" id="GO:0005506">
    <property type="term" value="F:iron ion binding"/>
    <property type="evidence" value="ECO:0007669"/>
    <property type="project" value="UniProtKB-UniRule"/>
</dbReference>
<dbReference type="GO" id="GO:0009102">
    <property type="term" value="P:biotin biosynthetic process"/>
    <property type="evidence" value="ECO:0007669"/>
    <property type="project" value="UniProtKB-UniRule"/>
</dbReference>
<dbReference type="CDD" id="cd01335">
    <property type="entry name" value="Radical_SAM"/>
    <property type="match status" value="1"/>
</dbReference>
<dbReference type="FunFam" id="3.20.20.70:FF:000011">
    <property type="entry name" value="Biotin synthase"/>
    <property type="match status" value="1"/>
</dbReference>
<dbReference type="Gene3D" id="3.20.20.70">
    <property type="entry name" value="Aldolase class I"/>
    <property type="match status" value="1"/>
</dbReference>
<dbReference type="HAMAP" id="MF_01694">
    <property type="entry name" value="BioB"/>
    <property type="match status" value="1"/>
</dbReference>
<dbReference type="InterPro" id="IPR013785">
    <property type="entry name" value="Aldolase_TIM"/>
</dbReference>
<dbReference type="InterPro" id="IPR010722">
    <property type="entry name" value="BATS_dom"/>
</dbReference>
<dbReference type="InterPro" id="IPR002684">
    <property type="entry name" value="Biotin_synth/BioAB"/>
</dbReference>
<dbReference type="InterPro" id="IPR024177">
    <property type="entry name" value="Biotin_synthase"/>
</dbReference>
<dbReference type="InterPro" id="IPR006638">
    <property type="entry name" value="Elp3/MiaA/NifB-like_rSAM"/>
</dbReference>
<dbReference type="InterPro" id="IPR007197">
    <property type="entry name" value="rSAM"/>
</dbReference>
<dbReference type="NCBIfam" id="TIGR00433">
    <property type="entry name" value="bioB"/>
    <property type="match status" value="1"/>
</dbReference>
<dbReference type="PANTHER" id="PTHR22976">
    <property type="entry name" value="BIOTIN SYNTHASE"/>
    <property type="match status" value="1"/>
</dbReference>
<dbReference type="PANTHER" id="PTHR22976:SF2">
    <property type="entry name" value="BIOTIN SYNTHASE, MITOCHONDRIAL"/>
    <property type="match status" value="1"/>
</dbReference>
<dbReference type="Pfam" id="PF06968">
    <property type="entry name" value="BATS"/>
    <property type="match status" value="1"/>
</dbReference>
<dbReference type="Pfam" id="PF04055">
    <property type="entry name" value="Radical_SAM"/>
    <property type="match status" value="1"/>
</dbReference>
<dbReference type="PIRSF" id="PIRSF001619">
    <property type="entry name" value="Biotin_synth"/>
    <property type="match status" value="1"/>
</dbReference>
<dbReference type="SFLD" id="SFLDF00272">
    <property type="entry name" value="biotin_synthase"/>
    <property type="match status" value="1"/>
</dbReference>
<dbReference type="SFLD" id="SFLDS00029">
    <property type="entry name" value="Radical_SAM"/>
    <property type="match status" value="1"/>
</dbReference>
<dbReference type="SMART" id="SM00876">
    <property type="entry name" value="BATS"/>
    <property type="match status" value="1"/>
</dbReference>
<dbReference type="SMART" id="SM00729">
    <property type="entry name" value="Elp3"/>
    <property type="match status" value="1"/>
</dbReference>
<dbReference type="SUPFAM" id="SSF102114">
    <property type="entry name" value="Radical SAM enzymes"/>
    <property type="match status" value="1"/>
</dbReference>
<dbReference type="PROSITE" id="PS51918">
    <property type="entry name" value="RADICAL_SAM"/>
    <property type="match status" value="1"/>
</dbReference>
<feature type="chain" id="PRO_0000381187" description="Biotin synthase">
    <location>
        <begin position="1"/>
        <end position="339"/>
    </location>
</feature>
<feature type="domain" description="Radical SAM core" evidence="2">
    <location>
        <begin position="53"/>
        <end position="271"/>
    </location>
</feature>
<feature type="binding site" evidence="1">
    <location>
        <position position="68"/>
    </location>
    <ligand>
        <name>[4Fe-4S] cluster</name>
        <dbReference type="ChEBI" id="CHEBI:49883"/>
        <note>4Fe-4S-S-AdoMet</note>
    </ligand>
</feature>
<feature type="binding site" evidence="1">
    <location>
        <position position="72"/>
    </location>
    <ligand>
        <name>[4Fe-4S] cluster</name>
        <dbReference type="ChEBI" id="CHEBI:49883"/>
        <note>4Fe-4S-S-AdoMet</note>
    </ligand>
</feature>
<feature type="binding site" evidence="1">
    <location>
        <position position="75"/>
    </location>
    <ligand>
        <name>[4Fe-4S] cluster</name>
        <dbReference type="ChEBI" id="CHEBI:49883"/>
        <note>4Fe-4S-S-AdoMet</note>
    </ligand>
</feature>
<feature type="binding site" evidence="1">
    <location>
        <position position="112"/>
    </location>
    <ligand>
        <name>[2Fe-2S] cluster</name>
        <dbReference type="ChEBI" id="CHEBI:190135"/>
    </ligand>
</feature>
<feature type="binding site" evidence="1">
    <location>
        <position position="143"/>
    </location>
    <ligand>
        <name>[2Fe-2S] cluster</name>
        <dbReference type="ChEBI" id="CHEBI:190135"/>
    </ligand>
</feature>
<feature type="binding site" evidence="1">
    <location>
        <position position="203"/>
    </location>
    <ligand>
        <name>[2Fe-2S] cluster</name>
        <dbReference type="ChEBI" id="CHEBI:190135"/>
    </ligand>
</feature>
<feature type="binding site" evidence="1">
    <location>
        <position position="275"/>
    </location>
    <ligand>
        <name>[2Fe-2S] cluster</name>
        <dbReference type="ChEBI" id="CHEBI:190135"/>
    </ligand>
</feature>
<reference key="1">
    <citation type="journal article" date="2001" name="Science">
        <title>The genome of the natural genetic engineer Agrobacterium tumefaciens C58.</title>
        <authorList>
            <person name="Wood D.W."/>
            <person name="Setubal J.C."/>
            <person name="Kaul R."/>
            <person name="Monks D.E."/>
            <person name="Kitajima J.P."/>
            <person name="Okura V.K."/>
            <person name="Zhou Y."/>
            <person name="Chen L."/>
            <person name="Wood G.E."/>
            <person name="Almeida N.F. Jr."/>
            <person name="Woo L."/>
            <person name="Chen Y."/>
            <person name="Paulsen I.T."/>
            <person name="Eisen J.A."/>
            <person name="Karp P.D."/>
            <person name="Bovee D. Sr."/>
            <person name="Chapman P."/>
            <person name="Clendenning J."/>
            <person name="Deatherage G."/>
            <person name="Gillet W."/>
            <person name="Grant C."/>
            <person name="Kutyavin T."/>
            <person name="Levy R."/>
            <person name="Li M.-J."/>
            <person name="McClelland E."/>
            <person name="Palmieri A."/>
            <person name="Raymond C."/>
            <person name="Rouse G."/>
            <person name="Saenphimmachak C."/>
            <person name="Wu Z."/>
            <person name="Romero P."/>
            <person name="Gordon D."/>
            <person name="Zhang S."/>
            <person name="Yoo H."/>
            <person name="Tao Y."/>
            <person name="Biddle P."/>
            <person name="Jung M."/>
            <person name="Krespan W."/>
            <person name="Perry M."/>
            <person name="Gordon-Kamm B."/>
            <person name="Liao L."/>
            <person name="Kim S."/>
            <person name="Hendrick C."/>
            <person name="Zhao Z.-Y."/>
            <person name="Dolan M."/>
            <person name="Chumley F."/>
            <person name="Tingey S.V."/>
            <person name="Tomb J.-F."/>
            <person name="Gordon M.P."/>
            <person name="Olson M.V."/>
            <person name="Nester E.W."/>
        </authorList>
    </citation>
    <scope>NUCLEOTIDE SEQUENCE [LARGE SCALE GENOMIC DNA]</scope>
    <source>
        <strain>C58 / ATCC 33970</strain>
    </source>
</reference>
<reference key="2">
    <citation type="journal article" date="2001" name="Science">
        <title>Genome sequence of the plant pathogen and biotechnology agent Agrobacterium tumefaciens C58.</title>
        <authorList>
            <person name="Goodner B."/>
            <person name="Hinkle G."/>
            <person name="Gattung S."/>
            <person name="Miller N."/>
            <person name="Blanchard M."/>
            <person name="Qurollo B."/>
            <person name="Goldman B.S."/>
            <person name="Cao Y."/>
            <person name="Askenazi M."/>
            <person name="Halling C."/>
            <person name="Mullin L."/>
            <person name="Houmiel K."/>
            <person name="Gordon J."/>
            <person name="Vaudin M."/>
            <person name="Iartchouk O."/>
            <person name="Epp A."/>
            <person name="Liu F."/>
            <person name="Wollam C."/>
            <person name="Allinger M."/>
            <person name="Doughty D."/>
            <person name="Scott C."/>
            <person name="Lappas C."/>
            <person name="Markelz B."/>
            <person name="Flanagan C."/>
            <person name="Crowell C."/>
            <person name="Gurson J."/>
            <person name="Lomo C."/>
            <person name="Sear C."/>
            <person name="Strub G."/>
            <person name="Cielo C."/>
            <person name="Slater S."/>
        </authorList>
    </citation>
    <scope>NUCLEOTIDE SEQUENCE [LARGE SCALE GENOMIC DNA]</scope>
    <source>
        <strain>C58 / ATCC 33970</strain>
    </source>
</reference>
<name>BIOB_AGRFC</name>
<keyword id="KW-0001">2Fe-2S</keyword>
<keyword id="KW-0004">4Fe-4S</keyword>
<keyword id="KW-0093">Biotin biosynthesis</keyword>
<keyword id="KW-0408">Iron</keyword>
<keyword id="KW-0411">Iron-sulfur</keyword>
<keyword id="KW-0479">Metal-binding</keyword>
<keyword id="KW-1185">Reference proteome</keyword>
<keyword id="KW-0949">S-adenosyl-L-methionine</keyword>
<keyword id="KW-0808">Transferase</keyword>
<evidence type="ECO:0000255" key="1">
    <source>
        <dbReference type="HAMAP-Rule" id="MF_01694"/>
    </source>
</evidence>
<evidence type="ECO:0000255" key="2">
    <source>
        <dbReference type="PROSITE-ProRule" id="PRU01266"/>
    </source>
</evidence>
<gene>
    <name evidence="1" type="primary">bioB</name>
    <name type="ordered locus">Atu3997</name>
    <name type="ORF">AGR_L_1708</name>
</gene>
<comment type="function">
    <text evidence="1">Catalyzes the conversion of dethiobiotin (DTB) to biotin by the insertion of a sulfur atom into dethiobiotin via a radical-based mechanism.</text>
</comment>
<comment type="catalytic activity">
    <reaction evidence="1">
        <text>(4R,5S)-dethiobiotin + (sulfur carrier)-SH + 2 reduced [2Fe-2S]-[ferredoxin] + 2 S-adenosyl-L-methionine = (sulfur carrier)-H + biotin + 2 5'-deoxyadenosine + 2 L-methionine + 2 oxidized [2Fe-2S]-[ferredoxin]</text>
        <dbReference type="Rhea" id="RHEA:22060"/>
        <dbReference type="Rhea" id="RHEA-COMP:10000"/>
        <dbReference type="Rhea" id="RHEA-COMP:10001"/>
        <dbReference type="Rhea" id="RHEA-COMP:14737"/>
        <dbReference type="Rhea" id="RHEA-COMP:14739"/>
        <dbReference type="ChEBI" id="CHEBI:17319"/>
        <dbReference type="ChEBI" id="CHEBI:29917"/>
        <dbReference type="ChEBI" id="CHEBI:33737"/>
        <dbReference type="ChEBI" id="CHEBI:33738"/>
        <dbReference type="ChEBI" id="CHEBI:57586"/>
        <dbReference type="ChEBI" id="CHEBI:57844"/>
        <dbReference type="ChEBI" id="CHEBI:59789"/>
        <dbReference type="ChEBI" id="CHEBI:64428"/>
        <dbReference type="ChEBI" id="CHEBI:149473"/>
        <dbReference type="EC" id="2.8.1.6"/>
    </reaction>
</comment>
<comment type="cofactor">
    <cofactor evidence="1">
        <name>[4Fe-4S] cluster</name>
        <dbReference type="ChEBI" id="CHEBI:49883"/>
    </cofactor>
    <text evidence="1">Binds 1 [4Fe-4S] cluster. The cluster is coordinated with 3 cysteines and an exchangeable S-adenosyl-L-methionine.</text>
</comment>
<comment type="cofactor">
    <cofactor evidence="1">
        <name>[2Fe-2S] cluster</name>
        <dbReference type="ChEBI" id="CHEBI:190135"/>
    </cofactor>
    <text evidence="1">Binds 1 [2Fe-2S] cluster. The cluster is coordinated with 3 cysteines and 1 arginine.</text>
</comment>
<comment type="pathway">
    <text evidence="1">Cofactor biosynthesis; biotin biosynthesis; biotin from 7,8-diaminononanoate: step 2/2.</text>
</comment>
<comment type="subunit">
    <text evidence="1">Homodimer.</text>
</comment>
<comment type="similarity">
    <text evidence="1">Belongs to the radical SAM superfamily. Biotin synthase family.</text>
</comment>
<organism>
    <name type="scientific">Agrobacterium fabrum (strain C58 / ATCC 33970)</name>
    <name type="common">Agrobacterium tumefaciens (strain C58)</name>
    <dbReference type="NCBI Taxonomy" id="176299"/>
    <lineage>
        <taxon>Bacteria</taxon>
        <taxon>Pseudomonadati</taxon>
        <taxon>Pseudomonadota</taxon>
        <taxon>Alphaproteobacteria</taxon>
        <taxon>Hyphomicrobiales</taxon>
        <taxon>Rhizobiaceae</taxon>
        <taxon>Rhizobium/Agrobacterium group</taxon>
        <taxon>Agrobacterium</taxon>
        <taxon>Agrobacterium tumefaciens complex</taxon>
    </lineage>
</organism>
<proteinExistence type="inferred from homology"/>
<sequence>MDQLATQIDGKPASIPAVETSSSLEEAKIIYNLPFNDLLFRAQQVHRCHFDANAIQMSRLLSIKTGGCPEDCSYCSQSARNPTGLKASKLMEVERVLAEARKAKEGGATRYCMGAAWRNPKERDMEAVVAMVEGVKALDMETCMTLGMLTPEQSERLADAGLDYYNHNVDTSERFYSEIITTRTFEDRLETLANVRDAGIKVCAGGILGMGETVEDRISMLVTLANLPVPPESVPINMLIPIPGSKLANADPVDPIDFVRTIALARILMPRSHVRLSAGRTEMSDETQALCFLAGANSIFIGETLLTADNPGEDHDTALFRRLGLKPMELQSSEAGGCR</sequence>